<proteinExistence type="inferred from homology"/>
<protein>
    <recommendedName>
        <fullName>Defensin-like protein 176</fullName>
    </recommendedName>
    <alternativeName>
        <fullName>Low-molecular-weight cysteine-rich protein 65</fullName>
        <shortName>Protein LCR65</shortName>
    </alternativeName>
</protein>
<keyword id="KW-0929">Antimicrobial</keyword>
<keyword id="KW-1015">Disulfide bond</keyword>
<keyword id="KW-0295">Fungicide</keyword>
<keyword id="KW-0611">Plant defense</keyword>
<keyword id="KW-1185">Reference proteome</keyword>
<keyword id="KW-0964">Secreted</keyword>
<keyword id="KW-0732">Signal</keyword>
<comment type="subcellular location">
    <subcellularLocation>
        <location evidence="1">Secreted</location>
    </subcellularLocation>
</comment>
<comment type="similarity">
    <text evidence="4">Belongs to the DEFL family.</text>
</comment>
<comment type="sequence caution" evidence="4">
    <conflict type="erroneous termination">
        <sequence resource="EMBL-CDS" id="ABK27960"/>
    </conflict>
    <text>Extended C-terminus.</text>
</comment>
<accession>P82779</accession>
<accession>A0MJW1</accession>
<name>DF176_ARATH</name>
<dbReference type="EMBL" id="AC012679">
    <property type="status" value="NOT_ANNOTATED_CDS"/>
    <property type="molecule type" value="Genomic_DNA"/>
</dbReference>
<dbReference type="EMBL" id="AC079676">
    <property type="status" value="NOT_ANNOTATED_CDS"/>
    <property type="molecule type" value="Genomic_DNA"/>
</dbReference>
<dbReference type="EMBL" id="CP002684">
    <property type="protein sequence ID" value="AEE35484.1"/>
    <property type="molecule type" value="Genomic_DNA"/>
</dbReference>
<dbReference type="EMBL" id="DQ912260">
    <property type="protein sequence ID" value="ABK27960.1"/>
    <property type="status" value="ALT_SEQ"/>
    <property type="molecule type" value="mRNA"/>
</dbReference>
<dbReference type="EMBL" id="EF182801">
    <property type="status" value="NOT_ANNOTATED_CDS"/>
    <property type="molecule type" value="mRNA"/>
</dbReference>
<dbReference type="RefSeq" id="NP_001031276.1">
    <property type="nucleotide sequence ID" value="NM_001036199.6"/>
</dbReference>
<dbReference type="STRING" id="3702.P82779"/>
<dbReference type="PaxDb" id="3702-AT1G73607.1"/>
<dbReference type="ProteomicsDB" id="224237"/>
<dbReference type="EnsemblPlants" id="AT1G73607.1">
    <property type="protein sequence ID" value="AT1G73607.1"/>
    <property type="gene ID" value="AT1G73607"/>
</dbReference>
<dbReference type="GeneID" id="3767693"/>
<dbReference type="Gramene" id="AT1G73607.1">
    <property type="protein sequence ID" value="AT1G73607.1"/>
    <property type="gene ID" value="AT1G73607"/>
</dbReference>
<dbReference type="KEGG" id="ath:AT1G73607"/>
<dbReference type="Araport" id="AT1G73607"/>
<dbReference type="TAIR" id="AT1G73607">
    <property type="gene designation" value="LCR65"/>
</dbReference>
<dbReference type="HOGENOM" id="CLU_196273_0_0_1"/>
<dbReference type="InParanoid" id="P82779"/>
<dbReference type="OrthoDB" id="1114388at2759"/>
<dbReference type="PhylomeDB" id="P82779"/>
<dbReference type="PRO" id="PR:P82779"/>
<dbReference type="Proteomes" id="UP000006548">
    <property type="component" value="Chromosome 1"/>
</dbReference>
<dbReference type="ExpressionAtlas" id="P82779">
    <property type="expression patterns" value="baseline and differential"/>
</dbReference>
<dbReference type="GO" id="GO:0005576">
    <property type="term" value="C:extracellular region"/>
    <property type="evidence" value="ECO:0007669"/>
    <property type="project" value="UniProtKB-SubCell"/>
</dbReference>
<dbReference type="GO" id="GO:0050832">
    <property type="term" value="P:defense response to fungus"/>
    <property type="evidence" value="ECO:0007669"/>
    <property type="project" value="UniProtKB-KW"/>
</dbReference>
<dbReference type="GO" id="GO:0031640">
    <property type="term" value="P:killing of cells of another organism"/>
    <property type="evidence" value="ECO:0007669"/>
    <property type="project" value="UniProtKB-KW"/>
</dbReference>
<organism evidence="4">
    <name type="scientific">Arabidopsis thaliana</name>
    <name type="common">Mouse-ear cress</name>
    <dbReference type="NCBI Taxonomy" id="3702"/>
    <lineage>
        <taxon>Eukaryota</taxon>
        <taxon>Viridiplantae</taxon>
        <taxon>Streptophyta</taxon>
        <taxon>Embryophyta</taxon>
        <taxon>Tracheophyta</taxon>
        <taxon>Spermatophyta</taxon>
        <taxon>Magnoliopsida</taxon>
        <taxon>eudicotyledons</taxon>
        <taxon>Gunneridae</taxon>
        <taxon>Pentapetalae</taxon>
        <taxon>rosids</taxon>
        <taxon>malvids</taxon>
        <taxon>Brassicales</taxon>
        <taxon>Brassicaceae</taxon>
        <taxon>Camelineae</taxon>
        <taxon>Arabidopsis</taxon>
    </lineage>
</organism>
<sequence>MAKATSSLVVPIIFLVIFALVEQNTGCFDYDVYQPCDHCRERCLKYYPVTRKAICRKNHCVCIGPCPDDKAIPDVKLFKNVKEQILS</sequence>
<reference evidence="4" key="1">
    <citation type="journal article" date="2000" name="Nature">
        <title>Sequence and analysis of chromosome 1 of the plant Arabidopsis thaliana.</title>
        <authorList>
            <person name="Theologis A."/>
            <person name="Ecker J.R."/>
            <person name="Palm C.J."/>
            <person name="Federspiel N.A."/>
            <person name="Kaul S."/>
            <person name="White O."/>
            <person name="Alonso J."/>
            <person name="Altafi H."/>
            <person name="Araujo R."/>
            <person name="Bowman C.L."/>
            <person name="Brooks S.Y."/>
            <person name="Buehler E."/>
            <person name="Chan A."/>
            <person name="Chao Q."/>
            <person name="Chen H."/>
            <person name="Cheuk R.F."/>
            <person name="Chin C.W."/>
            <person name="Chung M.K."/>
            <person name="Conn L."/>
            <person name="Conway A.B."/>
            <person name="Conway A.R."/>
            <person name="Creasy T.H."/>
            <person name="Dewar K."/>
            <person name="Dunn P."/>
            <person name="Etgu P."/>
            <person name="Feldblyum T.V."/>
            <person name="Feng J.-D."/>
            <person name="Fong B."/>
            <person name="Fujii C.Y."/>
            <person name="Gill J.E."/>
            <person name="Goldsmith A.D."/>
            <person name="Haas B."/>
            <person name="Hansen N.F."/>
            <person name="Hughes B."/>
            <person name="Huizar L."/>
            <person name="Hunter J.L."/>
            <person name="Jenkins J."/>
            <person name="Johnson-Hopson C."/>
            <person name="Khan S."/>
            <person name="Khaykin E."/>
            <person name="Kim C.J."/>
            <person name="Koo H.L."/>
            <person name="Kremenetskaia I."/>
            <person name="Kurtz D.B."/>
            <person name="Kwan A."/>
            <person name="Lam B."/>
            <person name="Langin-Hooper S."/>
            <person name="Lee A."/>
            <person name="Lee J.M."/>
            <person name="Lenz C.A."/>
            <person name="Li J.H."/>
            <person name="Li Y.-P."/>
            <person name="Lin X."/>
            <person name="Liu S.X."/>
            <person name="Liu Z.A."/>
            <person name="Luros J.S."/>
            <person name="Maiti R."/>
            <person name="Marziali A."/>
            <person name="Militscher J."/>
            <person name="Miranda M."/>
            <person name="Nguyen M."/>
            <person name="Nierman W.C."/>
            <person name="Osborne B.I."/>
            <person name="Pai G."/>
            <person name="Peterson J."/>
            <person name="Pham P.K."/>
            <person name="Rizzo M."/>
            <person name="Rooney T."/>
            <person name="Rowley D."/>
            <person name="Sakano H."/>
            <person name="Salzberg S.L."/>
            <person name="Schwartz J.R."/>
            <person name="Shinn P."/>
            <person name="Southwick A.M."/>
            <person name="Sun H."/>
            <person name="Tallon L.J."/>
            <person name="Tambunga G."/>
            <person name="Toriumi M.J."/>
            <person name="Town C.D."/>
            <person name="Utterback T."/>
            <person name="Van Aken S."/>
            <person name="Vaysberg M."/>
            <person name="Vysotskaia V.S."/>
            <person name="Walker M."/>
            <person name="Wu D."/>
            <person name="Yu G."/>
            <person name="Fraser C.M."/>
            <person name="Venter J.C."/>
            <person name="Davis R.W."/>
        </authorList>
    </citation>
    <scope>NUCLEOTIDE SEQUENCE [LARGE SCALE GENOMIC DNA]</scope>
    <source>
        <strain evidence="3">cv. Columbia</strain>
    </source>
</reference>
<reference key="2">
    <citation type="journal article" date="2017" name="Plant J.">
        <title>Araport11: a complete reannotation of the Arabidopsis thaliana reference genome.</title>
        <authorList>
            <person name="Cheng C.Y."/>
            <person name="Krishnakumar V."/>
            <person name="Chan A.P."/>
            <person name="Thibaud-Nissen F."/>
            <person name="Schobel S."/>
            <person name="Town C.D."/>
        </authorList>
    </citation>
    <scope>GENOME REANNOTATION</scope>
    <source>
        <strain>cv. Columbia</strain>
    </source>
</reference>
<reference key="3">
    <citation type="journal article" date="2006" name="Plant Biotechnol. J.">
        <title>Simultaneous high-throughput recombinational cloning of open reading frames in closed and open configurations.</title>
        <authorList>
            <person name="Underwood B.A."/>
            <person name="Vanderhaeghen R."/>
            <person name="Whitford R."/>
            <person name="Town C.D."/>
            <person name="Hilson P."/>
        </authorList>
    </citation>
    <scope>NUCLEOTIDE SEQUENCE [LARGE SCALE MRNA]</scope>
    <source>
        <strain>cv. Columbia</strain>
    </source>
</reference>
<reference key="4">
    <citation type="journal article" date="2007" name="Plant J.">
        <title>Small cysteine-rich peptides resembling antimicrobial peptides have been under-predicted in plants.</title>
        <authorList>
            <person name="Silverstein K.A.T."/>
            <person name="Moskal W.A. Jr."/>
            <person name="Wu H.C."/>
            <person name="Underwood B.A."/>
            <person name="Graham M.A."/>
            <person name="Town C.D."/>
            <person name="VandenBosch K.A."/>
        </authorList>
    </citation>
    <scope>NUCLEOTIDE SEQUENCE [LARGE SCALE MRNA]</scope>
    <source>
        <strain>cv. Columbia</strain>
    </source>
</reference>
<reference evidence="4" key="5">
    <citation type="journal article" date="2001" name="Plant Mol. Biol.">
        <title>Two large Arabidopsis thaliana gene families are homologous to the Brassica gene superfamily that encodes pollen coat proteins and the male component of the self-incompatibility response.</title>
        <authorList>
            <person name="Vanoosthuyse V."/>
            <person name="Miege C."/>
            <person name="Dumas C."/>
            <person name="Cock J.M."/>
        </authorList>
    </citation>
    <scope>IDENTIFICATION</scope>
</reference>
<reference key="6">
    <citation type="journal article" date="2005" name="Plant Physiol.">
        <title>Genome organization of more than 300 defensin-like genes in Arabidopsis.</title>
        <authorList>
            <person name="Silverstein K.A.T."/>
            <person name="Graham M.A."/>
            <person name="Paape T.D."/>
            <person name="VandenBosch K.A."/>
        </authorList>
    </citation>
    <scope>GENE FAMILY</scope>
</reference>
<gene>
    <name type="primary">LCR65</name>
    <name type="ordered locus">At1g73607</name>
    <name type="ORF">F25P22</name>
    <name type="ORF">F6D5</name>
</gene>
<feature type="signal peptide" evidence="2">
    <location>
        <begin position="1"/>
        <end position="23"/>
    </location>
</feature>
<feature type="chain" id="PRO_0000017303" description="Defensin-like protein 176">
    <location>
        <begin position="24"/>
        <end position="87"/>
    </location>
</feature>
<feature type="disulfide bond" evidence="1">
    <location>
        <begin position="27"/>
        <end position="66"/>
    </location>
</feature>
<feature type="disulfide bond" evidence="1">
    <location>
        <begin position="36"/>
        <end position="55"/>
    </location>
</feature>
<feature type="disulfide bond" evidence="1">
    <location>
        <begin position="39"/>
        <end position="60"/>
    </location>
</feature>
<feature type="disulfide bond" evidence="1">
    <location>
        <begin position="43"/>
        <end position="62"/>
    </location>
</feature>
<evidence type="ECO:0000250" key="1"/>
<evidence type="ECO:0000255" key="2"/>
<evidence type="ECO:0000269" key="3">
    <source>
    </source>
</evidence>
<evidence type="ECO:0000305" key="4"/>